<organism>
    <name type="scientific">Leptospira interrogans serogroup Icterohaemorrhagiae serovar Lai (strain 56601)</name>
    <dbReference type="NCBI Taxonomy" id="189518"/>
    <lineage>
        <taxon>Bacteria</taxon>
        <taxon>Pseudomonadati</taxon>
        <taxon>Spirochaetota</taxon>
        <taxon>Spirochaetia</taxon>
        <taxon>Leptospirales</taxon>
        <taxon>Leptospiraceae</taxon>
        <taxon>Leptospira</taxon>
    </lineage>
</organism>
<accession>Q8F5I5</accession>
<name>TPIS_LEPIN</name>
<evidence type="ECO:0000255" key="1">
    <source>
        <dbReference type="HAMAP-Rule" id="MF_00147"/>
    </source>
</evidence>
<evidence type="ECO:0007829" key="2">
    <source>
        <dbReference type="PDB" id="4X22"/>
    </source>
</evidence>
<evidence type="ECO:0007829" key="3">
    <source>
        <dbReference type="PDB" id="4YMZ"/>
    </source>
</evidence>
<dbReference type="EC" id="5.3.1.1" evidence="1"/>
<dbReference type="EMBL" id="AE010300">
    <property type="protein sequence ID" value="AAN48895.1"/>
    <property type="molecule type" value="Genomic_DNA"/>
</dbReference>
<dbReference type="RefSeq" id="NP_711877.1">
    <property type="nucleotide sequence ID" value="NC_004342.2"/>
</dbReference>
<dbReference type="RefSeq" id="WP_001232577.1">
    <property type="nucleotide sequence ID" value="NC_004342.2"/>
</dbReference>
<dbReference type="PDB" id="4X22">
    <property type="method" value="X-ray"/>
    <property type="resolution" value="2.08 A"/>
    <property type="chains" value="A=1-250"/>
</dbReference>
<dbReference type="PDB" id="4YMZ">
    <property type="method" value="X-ray"/>
    <property type="resolution" value="1.87 A"/>
    <property type="chains" value="A/B=2-250"/>
</dbReference>
<dbReference type="PDBsum" id="4X22"/>
<dbReference type="PDBsum" id="4YMZ"/>
<dbReference type="SMR" id="Q8F5I5"/>
<dbReference type="FunCoup" id="Q8F5I5">
    <property type="interactions" value="473"/>
</dbReference>
<dbReference type="STRING" id="189518.LA_1696"/>
<dbReference type="PaxDb" id="189518-LA_1696"/>
<dbReference type="EnsemblBacteria" id="AAN48895">
    <property type="protein sequence ID" value="AAN48895"/>
    <property type="gene ID" value="LA_1696"/>
</dbReference>
<dbReference type="KEGG" id="lil:LA_1696"/>
<dbReference type="PATRIC" id="fig|189518.3.peg.1689"/>
<dbReference type="HOGENOM" id="CLU_024251_2_3_12"/>
<dbReference type="InParanoid" id="Q8F5I5"/>
<dbReference type="OrthoDB" id="9809429at2"/>
<dbReference type="UniPathway" id="UPA00109">
    <property type="reaction ID" value="UER00189"/>
</dbReference>
<dbReference type="UniPathway" id="UPA00138"/>
<dbReference type="Proteomes" id="UP000001408">
    <property type="component" value="Chromosome I"/>
</dbReference>
<dbReference type="GO" id="GO:0005829">
    <property type="term" value="C:cytosol"/>
    <property type="evidence" value="ECO:0000318"/>
    <property type="project" value="GO_Central"/>
</dbReference>
<dbReference type="GO" id="GO:0004807">
    <property type="term" value="F:triose-phosphate isomerase activity"/>
    <property type="evidence" value="ECO:0000318"/>
    <property type="project" value="GO_Central"/>
</dbReference>
<dbReference type="GO" id="GO:0006094">
    <property type="term" value="P:gluconeogenesis"/>
    <property type="evidence" value="ECO:0000318"/>
    <property type="project" value="GO_Central"/>
</dbReference>
<dbReference type="GO" id="GO:0046166">
    <property type="term" value="P:glyceraldehyde-3-phosphate biosynthetic process"/>
    <property type="evidence" value="ECO:0000318"/>
    <property type="project" value="GO_Central"/>
</dbReference>
<dbReference type="GO" id="GO:0019563">
    <property type="term" value="P:glycerol catabolic process"/>
    <property type="evidence" value="ECO:0000318"/>
    <property type="project" value="GO_Central"/>
</dbReference>
<dbReference type="GO" id="GO:0006096">
    <property type="term" value="P:glycolytic process"/>
    <property type="evidence" value="ECO:0000318"/>
    <property type="project" value="GO_Central"/>
</dbReference>
<dbReference type="CDD" id="cd00311">
    <property type="entry name" value="TIM"/>
    <property type="match status" value="1"/>
</dbReference>
<dbReference type="FunFam" id="3.20.20.70:FF:000016">
    <property type="entry name" value="Triosephosphate isomerase"/>
    <property type="match status" value="1"/>
</dbReference>
<dbReference type="Gene3D" id="3.20.20.70">
    <property type="entry name" value="Aldolase class I"/>
    <property type="match status" value="1"/>
</dbReference>
<dbReference type="HAMAP" id="MF_00147_B">
    <property type="entry name" value="TIM_B"/>
    <property type="match status" value="1"/>
</dbReference>
<dbReference type="InterPro" id="IPR013785">
    <property type="entry name" value="Aldolase_TIM"/>
</dbReference>
<dbReference type="InterPro" id="IPR035990">
    <property type="entry name" value="TIM_sf"/>
</dbReference>
<dbReference type="InterPro" id="IPR022896">
    <property type="entry name" value="TrioseP_Isoase_bac/euk"/>
</dbReference>
<dbReference type="InterPro" id="IPR000652">
    <property type="entry name" value="Triosephosphate_isomerase"/>
</dbReference>
<dbReference type="InterPro" id="IPR020861">
    <property type="entry name" value="Triosephosphate_isomerase_AS"/>
</dbReference>
<dbReference type="NCBIfam" id="TIGR00419">
    <property type="entry name" value="tim"/>
    <property type="match status" value="1"/>
</dbReference>
<dbReference type="PANTHER" id="PTHR21139">
    <property type="entry name" value="TRIOSEPHOSPHATE ISOMERASE"/>
    <property type="match status" value="1"/>
</dbReference>
<dbReference type="PANTHER" id="PTHR21139:SF42">
    <property type="entry name" value="TRIOSEPHOSPHATE ISOMERASE"/>
    <property type="match status" value="1"/>
</dbReference>
<dbReference type="Pfam" id="PF00121">
    <property type="entry name" value="TIM"/>
    <property type="match status" value="1"/>
</dbReference>
<dbReference type="SUPFAM" id="SSF51351">
    <property type="entry name" value="Triosephosphate isomerase (TIM)"/>
    <property type="match status" value="1"/>
</dbReference>
<dbReference type="PROSITE" id="PS00171">
    <property type="entry name" value="TIM_1"/>
    <property type="match status" value="1"/>
</dbReference>
<dbReference type="PROSITE" id="PS51440">
    <property type="entry name" value="TIM_2"/>
    <property type="match status" value="1"/>
</dbReference>
<sequence>MRKTIIAGNWKMNLSLKEAVFLAHSIREKIPSISKDKVSMVFPSTLHLENVSKILEGSSVIVGAQNCYHSGLAAFTGETSPDQLKEIGVKVVMVGHSERRQFLGESNFFCNDKIRFLLKNEFTVLYCVGETLSERESGKTLEVLSSQIREGLKGIDSVFFSNLILAYEPVWAIGTGKVATPSQAQEVHSFIRKEISGLFVGASSISESISILYGGSVKPDNIQDLLKEKDIDGGLVGGASQKISSFAELF</sequence>
<proteinExistence type="evidence at protein level"/>
<protein>
    <recommendedName>
        <fullName evidence="1">Triosephosphate isomerase</fullName>
        <shortName evidence="1">TIM</shortName>
        <shortName evidence="1">TPI</shortName>
        <ecNumber evidence="1">5.3.1.1</ecNumber>
    </recommendedName>
    <alternativeName>
        <fullName evidence="1">Triose-phosphate isomerase</fullName>
    </alternativeName>
</protein>
<comment type="function">
    <text evidence="1">Involved in the gluconeogenesis. Catalyzes stereospecifically the conversion of dihydroxyacetone phosphate (DHAP) to D-glyceraldehyde-3-phosphate (G3P).</text>
</comment>
<comment type="catalytic activity">
    <reaction evidence="1">
        <text>D-glyceraldehyde 3-phosphate = dihydroxyacetone phosphate</text>
        <dbReference type="Rhea" id="RHEA:18585"/>
        <dbReference type="ChEBI" id="CHEBI:57642"/>
        <dbReference type="ChEBI" id="CHEBI:59776"/>
        <dbReference type="EC" id="5.3.1.1"/>
    </reaction>
</comment>
<comment type="pathway">
    <text evidence="1">Carbohydrate biosynthesis; gluconeogenesis.</text>
</comment>
<comment type="pathway">
    <text evidence="1">Carbohydrate degradation; glycolysis; D-glyceraldehyde 3-phosphate from glycerone phosphate: step 1/1.</text>
</comment>
<comment type="subunit">
    <text evidence="1">Homodimer.</text>
</comment>
<comment type="subcellular location">
    <subcellularLocation>
        <location evidence="1">Cytoplasm</location>
    </subcellularLocation>
</comment>
<comment type="similarity">
    <text evidence="1">Belongs to the triosephosphate isomerase family.</text>
</comment>
<keyword id="KW-0002">3D-structure</keyword>
<keyword id="KW-0963">Cytoplasm</keyword>
<keyword id="KW-0312">Gluconeogenesis</keyword>
<keyword id="KW-0324">Glycolysis</keyword>
<keyword id="KW-0413">Isomerase</keyword>
<keyword id="KW-1185">Reference proteome</keyword>
<feature type="chain" id="PRO_0000090237" description="Triosephosphate isomerase">
    <location>
        <begin position="1"/>
        <end position="250"/>
    </location>
</feature>
<feature type="active site" description="Electrophile" evidence="1">
    <location>
        <position position="96"/>
    </location>
</feature>
<feature type="active site" description="Proton acceptor" evidence="1">
    <location>
        <position position="168"/>
    </location>
</feature>
<feature type="binding site" evidence="1">
    <location>
        <begin position="9"/>
        <end position="11"/>
    </location>
    <ligand>
        <name>substrate</name>
    </ligand>
</feature>
<feature type="binding site" evidence="1">
    <location>
        <position position="174"/>
    </location>
    <ligand>
        <name>substrate</name>
    </ligand>
</feature>
<feature type="binding site" evidence="1">
    <location>
        <position position="216"/>
    </location>
    <ligand>
        <name>substrate</name>
    </ligand>
</feature>
<feature type="binding site" evidence="1">
    <location>
        <begin position="237"/>
        <end position="238"/>
    </location>
    <ligand>
        <name>substrate</name>
    </ligand>
</feature>
<feature type="strand" evidence="3">
    <location>
        <begin position="5"/>
        <end position="9"/>
    </location>
</feature>
<feature type="turn" evidence="2">
    <location>
        <begin position="11"/>
        <end position="13"/>
    </location>
</feature>
<feature type="helix" evidence="3">
    <location>
        <begin position="16"/>
        <end position="33"/>
    </location>
</feature>
<feature type="strand" evidence="3">
    <location>
        <begin position="37"/>
        <end position="42"/>
    </location>
</feature>
<feature type="helix" evidence="3">
    <location>
        <begin position="45"/>
        <end position="47"/>
    </location>
</feature>
<feature type="helix" evidence="3">
    <location>
        <begin position="48"/>
        <end position="55"/>
    </location>
</feature>
<feature type="strand" evidence="3">
    <location>
        <begin position="58"/>
        <end position="65"/>
    </location>
</feature>
<feature type="strand" evidence="3">
    <location>
        <begin position="69"/>
        <end position="74"/>
    </location>
</feature>
<feature type="helix" evidence="3">
    <location>
        <begin position="81"/>
        <end position="86"/>
    </location>
</feature>
<feature type="strand" evidence="3">
    <location>
        <begin position="91"/>
        <end position="94"/>
    </location>
</feature>
<feature type="helix" evidence="3">
    <location>
        <begin position="97"/>
        <end position="102"/>
    </location>
</feature>
<feature type="helix" evidence="3">
    <location>
        <begin position="107"/>
        <end position="119"/>
    </location>
</feature>
<feature type="strand" evidence="3">
    <location>
        <begin position="123"/>
        <end position="128"/>
    </location>
</feature>
<feature type="helix" evidence="3">
    <location>
        <begin position="132"/>
        <end position="136"/>
    </location>
</feature>
<feature type="helix" evidence="3">
    <location>
        <begin position="140"/>
        <end position="151"/>
    </location>
</feature>
<feature type="turn" evidence="2">
    <location>
        <begin position="152"/>
        <end position="154"/>
    </location>
</feature>
<feature type="helix" evidence="3">
    <location>
        <begin position="157"/>
        <end position="162"/>
    </location>
</feature>
<feature type="strand" evidence="3">
    <location>
        <begin position="163"/>
        <end position="167"/>
    </location>
</feature>
<feature type="helix" evidence="3">
    <location>
        <begin position="170"/>
        <end position="172"/>
    </location>
</feature>
<feature type="strand" evidence="3">
    <location>
        <begin position="173"/>
        <end position="176"/>
    </location>
</feature>
<feature type="helix" evidence="3">
    <location>
        <begin position="181"/>
        <end position="196"/>
    </location>
</feature>
<feature type="turn" evidence="3">
    <location>
        <begin position="200"/>
        <end position="202"/>
    </location>
</feature>
<feature type="helix" evidence="3">
    <location>
        <begin position="203"/>
        <end position="206"/>
    </location>
</feature>
<feature type="strand" evidence="3">
    <location>
        <begin position="211"/>
        <end position="216"/>
    </location>
</feature>
<feature type="helix" evidence="3">
    <location>
        <begin position="219"/>
        <end position="226"/>
    </location>
</feature>
<feature type="strand" evidence="3">
    <location>
        <begin position="233"/>
        <end position="237"/>
    </location>
</feature>
<feature type="helix" evidence="3">
    <location>
        <begin position="238"/>
        <end position="240"/>
    </location>
</feature>
<feature type="helix" evidence="3">
    <location>
        <begin position="243"/>
        <end position="247"/>
    </location>
</feature>
<gene>
    <name evidence="1" type="primary">tpiA</name>
    <name type="ordered locus">LA_1696</name>
</gene>
<reference key="1">
    <citation type="journal article" date="2003" name="Nature">
        <title>Unique physiological and pathogenic features of Leptospira interrogans revealed by whole-genome sequencing.</title>
        <authorList>
            <person name="Ren S.-X."/>
            <person name="Fu G."/>
            <person name="Jiang X.-G."/>
            <person name="Zeng R."/>
            <person name="Miao Y.-G."/>
            <person name="Xu H."/>
            <person name="Zhang Y.-X."/>
            <person name="Xiong H."/>
            <person name="Lu G."/>
            <person name="Lu L.-F."/>
            <person name="Jiang H.-Q."/>
            <person name="Jia J."/>
            <person name="Tu Y.-F."/>
            <person name="Jiang J.-X."/>
            <person name="Gu W.-Y."/>
            <person name="Zhang Y.-Q."/>
            <person name="Cai Z."/>
            <person name="Sheng H.-H."/>
            <person name="Yin H.-F."/>
            <person name="Zhang Y."/>
            <person name="Zhu G.-F."/>
            <person name="Wan M."/>
            <person name="Huang H.-L."/>
            <person name="Qian Z."/>
            <person name="Wang S.-Y."/>
            <person name="Ma W."/>
            <person name="Yao Z.-J."/>
            <person name="Shen Y."/>
            <person name="Qiang B.-Q."/>
            <person name="Xia Q.-C."/>
            <person name="Guo X.-K."/>
            <person name="Danchin A."/>
            <person name="Saint Girons I."/>
            <person name="Somerville R.L."/>
            <person name="Wen Y.-M."/>
            <person name="Shi M.-H."/>
            <person name="Chen Z."/>
            <person name="Xu J.-G."/>
            <person name="Zhao G.-P."/>
        </authorList>
    </citation>
    <scope>NUCLEOTIDE SEQUENCE [LARGE SCALE GENOMIC DNA]</scope>
    <source>
        <strain>56601</strain>
    </source>
</reference>